<feature type="signal peptide" evidence="4">
    <location>
        <begin position="1" status="less than"/>
        <end position="33"/>
    </location>
</feature>
<feature type="chain" id="PRO_0000392640" description="Beta-xylosidase/alpha-L-arabinofuranosidase 1" evidence="4">
    <location>
        <begin position="34"/>
        <end position="774"/>
    </location>
</feature>
<feature type="active site" evidence="2">
    <location>
        <position position="303"/>
    </location>
</feature>
<feature type="glycosylation site" description="N-linked (GlcNAc...) asparagine" evidence="4">
    <location>
        <position position="48"/>
    </location>
</feature>
<feature type="glycosylation site" description="N-linked (GlcNAc...) asparagine" evidence="4">
    <location>
        <position position="136"/>
    </location>
</feature>
<feature type="glycosylation site" description="N-linked (GlcNAc...) asparagine" evidence="4">
    <location>
        <position position="437"/>
    </location>
</feature>
<feature type="glycosylation site" description="N-linked (GlcNAc...) asparagine" evidence="4">
    <location>
        <position position="530"/>
    </location>
</feature>
<feature type="non-terminal residue" evidence="8">
    <location>
        <position position="1"/>
    </location>
</feature>
<evidence type="ECO:0000250" key="1">
    <source>
        <dbReference type="UniProtKB" id="P48792"/>
    </source>
</evidence>
<evidence type="ECO:0000250" key="2">
    <source>
        <dbReference type="UniProtKB" id="Q9FGY1"/>
    </source>
</evidence>
<evidence type="ECO:0000250" key="3">
    <source>
        <dbReference type="UniProtKB" id="Q9FLG1"/>
    </source>
</evidence>
<evidence type="ECO:0000255" key="4"/>
<evidence type="ECO:0000269" key="5">
    <source>
    </source>
</evidence>
<evidence type="ECO:0000303" key="6">
    <source>
    </source>
</evidence>
<evidence type="ECO:0000305" key="7"/>
<evidence type="ECO:0000312" key="8">
    <source>
        <dbReference type="EMBL" id="ABQ45227.1"/>
    </source>
</evidence>
<dbReference type="EC" id="3.2.1.37"/>
<dbReference type="EC" id="3.2.1.55"/>
<dbReference type="EMBL" id="EF569968">
    <property type="protein sequence ID" value="ABQ45227.1"/>
    <property type="molecule type" value="mRNA"/>
</dbReference>
<dbReference type="SMR" id="A5JTQ2"/>
<dbReference type="CAZy" id="GH3">
    <property type="family name" value="Glycoside Hydrolase Family 3"/>
</dbReference>
<dbReference type="GlyCosmos" id="A5JTQ2">
    <property type="glycosylation" value="4 sites, No reported glycans"/>
</dbReference>
<dbReference type="SABIO-RK" id="A5JTQ2"/>
<dbReference type="GO" id="GO:0048046">
    <property type="term" value="C:apoplast"/>
    <property type="evidence" value="ECO:0007669"/>
    <property type="project" value="TreeGrafter"/>
</dbReference>
<dbReference type="GO" id="GO:0046556">
    <property type="term" value="F:alpha-L-arabinofuranosidase activity"/>
    <property type="evidence" value="ECO:0007669"/>
    <property type="project" value="UniProtKB-EC"/>
</dbReference>
<dbReference type="GO" id="GO:0009044">
    <property type="term" value="F:xylan 1,4-beta-xylosidase activity"/>
    <property type="evidence" value="ECO:0007669"/>
    <property type="project" value="UniProtKB-EC"/>
</dbReference>
<dbReference type="GO" id="GO:0031222">
    <property type="term" value="P:arabinan catabolic process"/>
    <property type="evidence" value="ECO:0007669"/>
    <property type="project" value="TreeGrafter"/>
</dbReference>
<dbReference type="GO" id="GO:0045493">
    <property type="term" value="P:xylan catabolic process"/>
    <property type="evidence" value="ECO:0007669"/>
    <property type="project" value="UniProtKB-KW"/>
</dbReference>
<dbReference type="FunFam" id="2.60.40.10:FF:001384">
    <property type="entry name" value="Beta-D-xylosidase 4"/>
    <property type="match status" value="1"/>
</dbReference>
<dbReference type="FunFam" id="3.40.50.1700:FF:000001">
    <property type="entry name" value="probable beta-D-xylosidase 2"/>
    <property type="match status" value="1"/>
</dbReference>
<dbReference type="FunFam" id="3.20.20.300:FF:000004">
    <property type="entry name" value="probable beta-D-xylosidase 7"/>
    <property type="match status" value="1"/>
</dbReference>
<dbReference type="Gene3D" id="3.40.50.1700">
    <property type="entry name" value="Glycoside hydrolase family 3 C-terminal domain"/>
    <property type="match status" value="1"/>
</dbReference>
<dbReference type="Gene3D" id="3.20.20.300">
    <property type="entry name" value="Glycoside hydrolase, family 3, N-terminal domain"/>
    <property type="match status" value="1"/>
</dbReference>
<dbReference type="Gene3D" id="2.60.40.10">
    <property type="entry name" value="Immunoglobulins"/>
    <property type="match status" value="1"/>
</dbReference>
<dbReference type="InterPro" id="IPR044993">
    <property type="entry name" value="BXL"/>
</dbReference>
<dbReference type="InterPro" id="IPR026891">
    <property type="entry name" value="Fn3-like"/>
</dbReference>
<dbReference type="InterPro" id="IPR002772">
    <property type="entry name" value="Glyco_hydro_3_C"/>
</dbReference>
<dbReference type="InterPro" id="IPR036881">
    <property type="entry name" value="Glyco_hydro_3_C_sf"/>
</dbReference>
<dbReference type="InterPro" id="IPR001764">
    <property type="entry name" value="Glyco_hydro_3_N"/>
</dbReference>
<dbReference type="InterPro" id="IPR036962">
    <property type="entry name" value="Glyco_hydro_3_N_sf"/>
</dbReference>
<dbReference type="InterPro" id="IPR017853">
    <property type="entry name" value="Glycoside_hydrolase_SF"/>
</dbReference>
<dbReference type="InterPro" id="IPR013783">
    <property type="entry name" value="Ig-like_fold"/>
</dbReference>
<dbReference type="PANTHER" id="PTHR42721:SF14">
    <property type="entry name" value="BETA-D-XYLOSIDASE 4-RELATED"/>
    <property type="match status" value="1"/>
</dbReference>
<dbReference type="PANTHER" id="PTHR42721">
    <property type="entry name" value="SUGAR HYDROLASE-RELATED"/>
    <property type="match status" value="1"/>
</dbReference>
<dbReference type="Pfam" id="PF14310">
    <property type="entry name" value="Fn3-like"/>
    <property type="match status" value="1"/>
</dbReference>
<dbReference type="Pfam" id="PF00933">
    <property type="entry name" value="Glyco_hydro_3"/>
    <property type="match status" value="1"/>
</dbReference>
<dbReference type="Pfam" id="PF01915">
    <property type="entry name" value="Glyco_hydro_3_C"/>
    <property type="match status" value="1"/>
</dbReference>
<dbReference type="PRINTS" id="PR00133">
    <property type="entry name" value="GLHYDRLASE3"/>
</dbReference>
<dbReference type="SMART" id="SM01217">
    <property type="entry name" value="Fn3_like"/>
    <property type="match status" value="1"/>
</dbReference>
<dbReference type="SUPFAM" id="SSF51445">
    <property type="entry name" value="(Trans)glycosidases"/>
    <property type="match status" value="1"/>
</dbReference>
<dbReference type="SUPFAM" id="SSF52279">
    <property type="entry name" value="Beta-D-glucan exohydrolase, C-terminal domain"/>
    <property type="match status" value="1"/>
</dbReference>
<reference evidence="7 8" key="1">
    <citation type="journal article" date="2007" name="J. Exp. Bot.">
        <title>Molecular cloning of a bifunctional beta-xylosidase/alpha-L-arabinosidase from alfalfa roots: heterologous expression in Medicago truncatula and substrate specificity of the purified enzyme.</title>
        <authorList>
            <person name="Xiong J.S."/>
            <person name="Balland-Vanney M."/>
            <person name="Xie Z.P."/>
            <person name="Schultze M."/>
            <person name="Kondorosi A."/>
            <person name="Kondorosi E."/>
            <person name="Staehelin C."/>
        </authorList>
    </citation>
    <scope>NUCLEOTIDE SEQUENCE [MRNA]</scope>
    <scope>FUNCTION</scope>
    <scope>CATALYTIC ACTIVITY</scope>
    <scope>BIOPHYSICOCHEMICAL PROPERTIES</scope>
    <scope>PROTEOLYTIC PROCESSING</scope>
    <source>
        <strain evidence="5">cv. A2</strain>
        <tissue evidence="8">Root nodule</tissue>
    </source>
</reference>
<gene>
    <name evidence="8" type="primary">Xyl1</name>
</gene>
<accession>A5JTQ2</accession>
<proteinExistence type="evidence at protein level"/>
<sequence>ANTKNREPKVSSVFLCFSIFYVTVLLNCNHVYGQTSTVFACDVAKNTNVSSYGFCDNSLSVEDRVSDLVKRLTLQEKIGNLGNSAVEVSRLGIPKYEWWSEALHGVSNIGPGTHFSSLVPGATNFPMPILTAASFNTSLFQAIGSVVSNEARAMYNVGLAGLTYWSPNINIFRDPRWGRGQETPGEDPLLSSKYAAGYVKGLQQTDDGDSDKLKVAACCKHYTAYDVDNWKGVQRYTFDAVVSQQDLDDTFQPPFKSCVIDGNVASVMCSYNKVNGKPTCADPDLLKGVIRGKWKLNGYIVSDCDSVEVLYKDQHYTKTPEEAAAKTILSGLDLDCGSYLGQYTGGAVKQGLVDEASITNAVSNNFATLMRLGFFDGDPSKQPYGNLGPKDVCTPENQELAREAARQGIVLLKNSPRSLPLSSKAIKSLAVIGPNANATRVMIGNYEGIPCKYTSPLQGLTAFVPTSYAPGCPDVQCANAQIDDAAKIAASADATIIVVGANLAIEAESLDRVNILLPGQQQQLVNEVANVSKGPVILVIMSGGGMDVSFAKTNDKITSILWVGYPGEAGGAAIADVIFGSYNPSGRLPMTWYPQSYVEKVPMTNMNMRADPATGYPGRTYRFYKGETVFSFGDGMSFGTVEHKIVKAPQLVSVPLAEDHECRSLECKSLDVADKHCQNLAFDIHLSVKNMGKMSSSHSVLLFFTPPNVHNAPQKHLLGFEKVQLAGKSEGMVRFKVDVCNDLSVVDELGNRKVPLGDHMLHVGNLKHSLSVRI</sequence>
<comment type="function">
    <text evidence="5">A bifunctional beta-xylosidase/alpha-L-arabinosidase, exo-enzyme that acts synergistically with endohydrolases. Releases xylose and arabinose from cell walls. Does not cleave xylan from oat spelts although xylan from oat spelts was degraded to xylose when this enzyme was used in combination with xylanase. Also releases xylose and arabinose from aryl glycosides, xylo-oligosaccharides, arabinan from sugar beet and arabino-oligosaccharides, arabinan from sugar beet and arabinoxylan from wheat.</text>
</comment>
<comment type="catalytic activity">
    <reaction evidence="5">
        <text>Hydrolysis of (1-&gt;4)-beta-D-xylans, to remove successive D-xylose residues from the non-reducing termini.</text>
        <dbReference type="EC" id="3.2.1.37"/>
    </reaction>
</comment>
<comment type="catalytic activity">
    <reaction evidence="5">
        <text>Hydrolysis of terminal non-reducing alpha-L-arabinofuranoside residues in alpha-L-arabinosides.</text>
        <dbReference type="EC" id="3.2.1.55"/>
    </reaction>
</comment>
<comment type="biophysicochemical properties">
    <kinetics>
        <KM evidence="5">0.59 mM for pNP-beta-D-xlyoside (at 37 degrees Celsius)</KM>
        <KM evidence="5">0.94 mM for pNP-alpha-L-arabinofuranoside (at 37 degrees Celsius)</KM>
        <KM evidence="5">1.2 mM for pNP-alpha-L-arabinopyranoside (at 37 degrees Celsius)</KM>
    </kinetics>
</comment>
<comment type="subcellular location">
    <subcellularLocation>
        <location evidence="3">Secreted</location>
        <location evidence="3">Extracellular space</location>
        <location evidence="3">Extracellular matrix</location>
    </subcellularLocation>
</comment>
<comment type="PTM">
    <text evidence="5">Proteolytically cleaved in roots to form a 65 kDa protein.</text>
</comment>
<comment type="similarity">
    <text evidence="4">Belongs to the glycoside hydrolase 3 family.</text>
</comment>
<protein>
    <recommendedName>
        <fullName evidence="6 8">Beta-xylosidase/alpha-L-arabinofuranosidase 1</fullName>
    </recommendedName>
    <alternativeName>
        <fullName>Xylan 1,4-beta-xylosidase/Alpha-L-arabinofuranosidase 1</fullName>
        <shortName evidence="6">MsXyl1</shortName>
    </alternativeName>
    <domain>
        <recommendedName>
            <fullName>Beta-xylosidase</fullName>
            <ecNumber>3.2.1.37</ecNumber>
        </recommendedName>
        <alternativeName>
            <fullName evidence="1">1,4-beta-D-xylan xylohydrolase</fullName>
        </alternativeName>
        <alternativeName>
            <fullName>Xylan 1,4-beta-xylosidase</fullName>
        </alternativeName>
    </domain>
    <domain>
        <recommendedName>
            <fullName>Alpha-L-arabinofuranosidase</fullName>
            <shortName evidence="1">Arabinosidase</shortName>
            <ecNumber>3.2.1.55</ecNumber>
        </recommendedName>
    </domain>
</protein>
<organism>
    <name type="scientific">Medicago sativa subsp. varia</name>
    <name type="common">Alfalfa</name>
    <name type="synonym">Medicago varia</name>
    <dbReference type="NCBI Taxonomy" id="36902"/>
    <lineage>
        <taxon>Eukaryota</taxon>
        <taxon>Viridiplantae</taxon>
        <taxon>Streptophyta</taxon>
        <taxon>Embryophyta</taxon>
        <taxon>Tracheophyta</taxon>
        <taxon>Spermatophyta</taxon>
        <taxon>Magnoliopsida</taxon>
        <taxon>eudicotyledons</taxon>
        <taxon>Gunneridae</taxon>
        <taxon>Pentapetalae</taxon>
        <taxon>rosids</taxon>
        <taxon>fabids</taxon>
        <taxon>Fabales</taxon>
        <taxon>Fabaceae</taxon>
        <taxon>Papilionoideae</taxon>
        <taxon>50 kb inversion clade</taxon>
        <taxon>NPAAA clade</taxon>
        <taxon>Hologalegina</taxon>
        <taxon>IRL clade</taxon>
        <taxon>Trifolieae</taxon>
        <taxon>Medicago</taxon>
    </lineage>
</organism>
<name>XYL1_MEDSV</name>
<keyword id="KW-0119">Carbohydrate metabolism</keyword>
<keyword id="KW-0272">Extracellular matrix</keyword>
<keyword id="KW-0325">Glycoprotein</keyword>
<keyword id="KW-0326">Glycosidase</keyword>
<keyword id="KW-0378">Hydrolase</keyword>
<keyword id="KW-0511">Multifunctional enzyme</keyword>
<keyword id="KW-0624">Polysaccharide degradation</keyword>
<keyword id="KW-0964">Secreted</keyword>
<keyword id="KW-0732">Signal</keyword>
<keyword id="KW-0858">Xylan degradation</keyword>